<keyword id="KW-0333">Golgi apparatus</keyword>
<keyword id="KW-0343">GTPase activation</keyword>
<keyword id="KW-0597">Phosphoprotein</keyword>
<keyword id="KW-1185">Reference proteome</keyword>
<comment type="function">
    <text evidence="1">Plays a role in the regulation of starvation-induced autophagosome formation. Together with the TRAPPIII complex, regulates a constitutive trafficking step from peripheral recycling endosomes to the early Golgi, maintaining the cycling pool of ATG9 required for initiation of autophagy.</text>
</comment>
<comment type="subunit">
    <text evidence="1">Interacts with ULK1. May interact with RAB11A and RAB11B, but does not exhibit any GTPase-activating activity toward these proteins. Interacts with TRAPPC8.</text>
</comment>
<comment type="subcellular location">
    <subcellularLocation>
        <location evidence="1">Golgi apparatus</location>
        <location evidence="1">cis-Golgi network</location>
    </subcellularLocation>
    <subcellularLocation>
        <location evidence="1">Golgi apparatus</location>
        <location evidence="1">trans-Golgi network</location>
    </subcellularLocation>
    <text evidence="1">After amino acid starvation, Golgi apparatus-associated protein levels increase compared with fed conditions. May be cycling between the Golgi apparatus and an endosomal pool, redistributing to the Golgi apparatus upon starvation.</text>
</comment>
<comment type="sequence caution" evidence="4">
    <conflict type="erroneous initiation">
        <sequence resource="EMBL-CDS" id="AAH42515"/>
    </conflict>
</comment>
<comment type="sequence caution" evidence="4">
    <conflict type="erroneous initiation">
        <sequence resource="EMBL-CDS" id="AAH96446"/>
    </conflict>
</comment>
<comment type="sequence caution" evidence="4">
    <conflict type="erroneous initiation">
        <sequence resource="EMBL-CDS" id="BAE20781"/>
    </conflict>
</comment>
<accession>Q8CGA2</accession>
<accession>Q3V2L6</accession>
<accession>Q4VAC6</accession>
<accession>Q8CHA5</accession>
<name>TBC14_MOUSE</name>
<sequence>MTDGNLSTSMNGVALMGILDGRQGDSLQDLQHLSIKAAPRSLSVPEYGPSLKLGALEDRHSLQSVDSGIPTLEIGNPEPVPCSVVHVKRKQSESEIVPERAFQSACPLPSCTPSAPTCSEREQVVRKSSTFPRTGYDSVKLYSPTSKALSRSDNVSVCSVSSLGTELSTTLSVSNEDILDLMVTSNSSAIVTLENDDDPQFTDVTLSSINETSDLHQQDCVAETEEGRKLKLLHPFSHFFTRNLLARKQNARLDRQRDLGWKLFGKVPLRETAQKDSKKTQKEYEDKAGRPSRPPSPKQNVRKNLDFEPLSTTALILEDRPANLPAKPAEEAQKHRQQYEEMVLQAKKRELKEAQRRRKQLEERCKVEESIGNAVLTWNNEILPNWETMWCSKKVRDLWWQGIPPSVRGKVWSLAIGNELNITHELFDICLARAKERWRSLSTGGSEVENEDAGFSAADREASLELIKLDISRTFPNLCIFQQGGPYHDMLHSILGAYTCYRPDVGYVQGMSFIAAVLILNLDTADAFIAFSNLLNKPCQMAFFRVDHGLMLTYFAAFEVFFEENLPKLFAHFKKNNLTADIYLIDWIFTLYSKSLPLDLACRIWDVFCRDGEEFLFRTALGILKLFEDILTRMDFIHSAQFLTRLPEDLPADEVFAAISTVQMQSRNKKWAQVLSALQKDSREMEKGSPSLRH</sequence>
<reference key="1">
    <citation type="journal article" date="2004" name="Genome Res.">
        <title>The status, quality, and expansion of the NIH full-length cDNA project: the Mammalian Gene Collection (MGC).</title>
        <authorList>
            <consortium name="The MGC Project Team"/>
        </authorList>
    </citation>
    <scope>NUCLEOTIDE SEQUENCE [LARGE SCALE MRNA]</scope>
    <source>
        <strain>Czech II</strain>
        <tissue>Olfactory epithelium</tissue>
    </source>
</reference>
<reference key="2">
    <citation type="journal article" date="2005" name="Science">
        <title>The transcriptional landscape of the mammalian genome.</title>
        <authorList>
            <person name="Carninci P."/>
            <person name="Kasukawa T."/>
            <person name="Katayama S."/>
            <person name="Gough J."/>
            <person name="Frith M.C."/>
            <person name="Maeda N."/>
            <person name="Oyama R."/>
            <person name="Ravasi T."/>
            <person name="Lenhard B."/>
            <person name="Wells C."/>
            <person name="Kodzius R."/>
            <person name="Shimokawa K."/>
            <person name="Bajic V.B."/>
            <person name="Brenner S.E."/>
            <person name="Batalov S."/>
            <person name="Forrest A.R."/>
            <person name="Zavolan M."/>
            <person name="Davis M.J."/>
            <person name="Wilming L.G."/>
            <person name="Aidinis V."/>
            <person name="Allen J.E."/>
            <person name="Ambesi-Impiombato A."/>
            <person name="Apweiler R."/>
            <person name="Aturaliya R.N."/>
            <person name="Bailey T.L."/>
            <person name="Bansal M."/>
            <person name="Baxter L."/>
            <person name="Beisel K.W."/>
            <person name="Bersano T."/>
            <person name="Bono H."/>
            <person name="Chalk A.M."/>
            <person name="Chiu K.P."/>
            <person name="Choudhary V."/>
            <person name="Christoffels A."/>
            <person name="Clutterbuck D.R."/>
            <person name="Crowe M.L."/>
            <person name="Dalla E."/>
            <person name="Dalrymple B.P."/>
            <person name="de Bono B."/>
            <person name="Della Gatta G."/>
            <person name="di Bernardo D."/>
            <person name="Down T."/>
            <person name="Engstrom P."/>
            <person name="Fagiolini M."/>
            <person name="Faulkner G."/>
            <person name="Fletcher C.F."/>
            <person name="Fukushima T."/>
            <person name="Furuno M."/>
            <person name="Futaki S."/>
            <person name="Gariboldi M."/>
            <person name="Georgii-Hemming P."/>
            <person name="Gingeras T.R."/>
            <person name="Gojobori T."/>
            <person name="Green R.E."/>
            <person name="Gustincich S."/>
            <person name="Harbers M."/>
            <person name="Hayashi Y."/>
            <person name="Hensch T.K."/>
            <person name="Hirokawa N."/>
            <person name="Hill D."/>
            <person name="Huminiecki L."/>
            <person name="Iacono M."/>
            <person name="Ikeo K."/>
            <person name="Iwama A."/>
            <person name="Ishikawa T."/>
            <person name="Jakt M."/>
            <person name="Kanapin A."/>
            <person name="Katoh M."/>
            <person name="Kawasawa Y."/>
            <person name="Kelso J."/>
            <person name="Kitamura H."/>
            <person name="Kitano H."/>
            <person name="Kollias G."/>
            <person name="Krishnan S.P."/>
            <person name="Kruger A."/>
            <person name="Kummerfeld S.K."/>
            <person name="Kurochkin I.V."/>
            <person name="Lareau L.F."/>
            <person name="Lazarevic D."/>
            <person name="Lipovich L."/>
            <person name="Liu J."/>
            <person name="Liuni S."/>
            <person name="McWilliam S."/>
            <person name="Madan Babu M."/>
            <person name="Madera M."/>
            <person name="Marchionni L."/>
            <person name="Matsuda H."/>
            <person name="Matsuzawa S."/>
            <person name="Miki H."/>
            <person name="Mignone F."/>
            <person name="Miyake S."/>
            <person name="Morris K."/>
            <person name="Mottagui-Tabar S."/>
            <person name="Mulder N."/>
            <person name="Nakano N."/>
            <person name="Nakauchi H."/>
            <person name="Ng P."/>
            <person name="Nilsson R."/>
            <person name="Nishiguchi S."/>
            <person name="Nishikawa S."/>
            <person name="Nori F."/>
            <person name="Ohara O."/>
            <person name="Okazaki Y."/>
            <person name="Orlando V."/>
            <person name="Pang K.C."/>
            <person name="Pavan W.J."/>
            <person name="Pavesi G."/>
            <person name="Pesole G."/>
            <person name="Petrovsky N."/>
            <person name="Piazza S."/>
            <person name="Reed J."/>
            <person name="Reid J.F."/>
            <person name="Ring B.Z."/>
            <person name="Ringwald M."/>
            <person name="Rost B."/>
            <person name="Ruan Y."/>
            <person name="Salzberg S.L."/>
            <person name="Sandelin A."/>
            <person name="Schneider C."/>
            <person name="Schoenbach C."/>
            <person name="Sekiguchi K."/>
            <person name="Semple C.A."/>
            <person name="Seno S."/>
            <person name="Sessa L."/>
            <person name="Sheng Y."/>
            <person name="Shibata Y."/>
            <person name="Shimada H."/>
            <person name="Shimada K."/>
            <person name="Silva D."/>
            <person name="Sinclair B."/>
            <person name="Sperling S."/>
            <person name="Stupka E."/>
            <person name="Sugiura K."/>
            <person name="Sultana R."/>
            <person name="Takenaka Y."/>
            <person name="Taki K."/>
            <person name="Tammoja K."/>
            <person name="Tan S.L."/>
            <person name="Tang S."/>
            <person name="Taylor M.S."/>
            <person name="Tegner J."/>
            <person name="Teichmann S.A."/>
            <person name="Ueda H.R."/>
            <person name="van Nimwegen E."/>
            <person name="Verardo R."/>
            <person name="Wei C.L."/>
            <person name="Yagi K."/>
            <person name="Yamanishi H."/>
            <person name="Zabarovsky E."/>
            <person name="Zhu S."/>
            <person name="Zimmer A."/>
            <person name="Hide W."/>
            <person name="Bult C."/>
            <person name="Grimmond S.M."/>
            <person name="Teasdale R.D."/>
            <person name="Liu E.T."/>
            <person name="Brusic V."/>
            <person name="Quackenbush J."/>
            <person name="Wahlestedt C."/>
            <person name="Mattick J.S."/>
            <person name="Hume D.A."/>
            <person name="Kai C."/>
            <person name="Sasaki D."/>
            <person name="Tomaru Y."/>
            <person name="Fukuda S."/>
            <person name="Kanamori-Katayama M."/>
            <person name="Suzuki M."/>
            <person name="Aoki J."/>
            <person name="Arakawa T."/>
            <person name="Iida J."/>
            <person name="Imamura K."/>
            <person name="Itoh M."/>
            <person name="Kato T."/>
            <person name="Kawaji H."/>
            <person name="Kawagashira N."/>
            <person name="Kawashima T."/>
            <person name="Kojima M."/>
            <person name="Kondo S."/>
            <person name="Konno H."/>
            <person name="Nakano K."/>
            <person name="Ninomiya N."/>
            <person name="Nishio T."/>
            <person name="Okada M."/>
            <person name="Plessy C."/>
            <person name="Shibata K."/>
            <person name="Shiraki T."/>
            <person name="Suzuki S."/>
            <person name="Tagami M."/>
            <person name="Waki K."/>
            <person name="Watahiki A."/>
            <person name="Okamura-Oho Y."/>
            <person name="Suzuki H."/>
            <person name="Kawai J."/>
            <person name="Hayashizaki Y."/>
        </authorList>
    </citation>
    <scope>NUCLEOTIDE SEQUENCE [LARGE SCALE MRNA] OF 1-242</scope>
    <source>
        <strain>C57BL/6J</strain>
        <tissue>Testis</tissue>
    </source>
</reference>
<reference key="3">
    <citation type="journal article" date="2002" name="DNA Res.">
        <title>Prediction of the coding sequences of mouse homologues of KIAA gene: I. The complete nucleotide sequences of 100 mouse KIAA-homologous cDNAs identified by screening of terminal sequences of cDNA clones randomly sampled from size-fractionated libraries.</title>
        <authorList>
            <person name="Okazaki N."/>
            <person name="Kikuno R."/>
            <person name="Ohara R."/>
            <person name="Inamoto S."/>
            <person name="Hara Y."/>
            <person name="Nagase T."/>
            <person name="Ohara O."/>
            <person name="Koga H."/>
        </authorList>
    </citation>
    <scope>NUCLEOTIDE SEQUENCE [LARGE SCALE MRNA] OF 50-694</scope>
    <source>
        <tissue>Brain</tissue>
    </source>
</reference>
<reference key="4">
    <citation type="journal article" date="2010" name="Cell">
        <title>A tissue-specific atlas of mouse protein phosphorylation and expression.</title>
        <authorList>
            <person name="Huttlin E.L."/>
            <person name="Jedrychowski M.P."/>
            <person name="Elias J.E."/>
            <person name="Goswami T."/>
            <person name="Rad R."/>
            <person name="Beausoleil S.A."/>
            <person name="Villen J."/>
            <person name="Haas W."/>
            <person name="Sowa M.E."/>
            <person name="Gygi S.P."/>
        </authorList>
    </citation>
    <scope>PHOSPHORYLATION [LARGE SCALE ANALYSIS] AT SER-92</scope>
    <scope>IDENTIFICATION BY MASS SPECTROMETRY [LARGE SCALE ANALYSIS]</scope>
    <source>
        <tissue>Kidney</tissue>
    </source>
</reference>
<feature type="chain" id="PRO_0000208041" description="TBC1 domain family member 14">
    <location>
        <begin position="1"/>
        <end position="694"/>
    </location>
</feature>
<feature type="domain" description="Rab-GAP TBC" evidence="2">
    <location>
        <begin position="402"/>
        <end position="612"/>
    </location>
</feature>
<feature type="region of interest" description="Disordered" evidence="3">
    <location>
        <begin position="272"/>
        <end position="305"/>
    </location>
</feature>
<feature type="compositionally biased region" description="Basic and acidic residues" evidence="3">
    <location>
        <begin position="272"/>
        <end position="289"/>
    </location>
</feature>
<feature type="modified residue" description="Phosphoserine" evidence="5">
    <location>
        <position position="92"/>
    </location>
</feature>
<feature type="modified residue" description="Phosphoserine" evidence="1">
    <location>
        <position position="296"/>
    </location>
</feature>
<feature type="sequence conflict" description="In Ref. 1; AAH96446 and 2; BAE20781." evidence="4" ref="1 2">
    <original>E</original>
    <variation>D</variation>
    <location>
        <position position="46"/>
    </location>
</feature>
<feature type="sequence conflict" description="In Ref. 1; AAH42515." evidence="4" ref="1">
    <original>H</original>
    <variation>Q</variation>
    <location>
        <position position="234"/>
    </location>
</feature>
<protein>
    <recommendedName>
        <fullName>TBC1 domain family member 14</fullName>
    </recommendedName>
</protein>
<gene>
    <name type="primary">Tbc1d14</name>
    <name type="synonym">D5Ertd110e</name>
    <name type="synonym">Kiaa1322</name>
</gene>
<dbReference type="EMBL" id="BC096446">
    <property type="protein sequence ID" value="AAH96446.1"/>
    <property type="status" value="ALT_INIT"/>
    <property type="molecule type" value="mRNA"/>
</dbReference>
<dbReference type="EMBL" id="BC042515">
    <property type="protein sequence ID" value="AAH42515.1"/>
    <property type="status" value="ALT_INIT"/>
    <property type="molecule type" value="mRNA"/>
</dbReference>
<dbReference type="EMBL" id="AK131724">
    <property type="protein sequence ID" value="BAE20781.1"/>
    <property type="status" value="ALT_INIT"/>
    <property type="molecule type" value="mRNA"/>
</dbReference>
<dbReference type="EMBL" id="AB093293">
    <property type="protein sequence ID" value="BAC41476.1"/>
    <property type="molecule type" value="mRNA"/>
</dbReference>
<dbReference type="CCDS" id="CCDS19240.2"/>
<dbReference type="RefSeq" id="NP_001106833.1">
    <property type="nucleotide sequence ID" value="NM_001113362.1"/>
</dbReference>
<dbReference type="RefSeq" id="NP_001106835.1">
    <property type="nucleotide sequence ID" value="NM_001113364.1"/>
</dbReference>
<dbReference type="RefSeq" id="NP_598671.3">
    <property type="nucleotide sequence ID" value="NM_133910.3"/>
</dbReference>
<dbReference type="SMR" id="Q8CGA2"/>
<dbReference type="BioGRID" id="221546">
    <property type="interactions" value="1"/>
</dbReference>
<dbReference type="FunCoup" id="Q8CGA2">
    <property type="interactions" value="1389"/>
</dbReference>
<dbReference type="STRING" id="10090.ENSMUSP00000117414"/>
<dbReference type="iPTMnet" id="Q8CGA2"/>
<dbReference type="PhosphoSitePlus" id="Q8CGA2"/>
<dbReference type="PaxDb" id="10090-ENSMUSP00000116519"/>
<dbReference type="ProteomicsDB" id="254822"/>
<dbReference type="DNASU" id="100855"/>
<dbReference type="GeneID" id="100855"/>
<dbReference type="KEGG" id="mmu:100855"/>
<dbReference type="AGR" id="MGI:1098708"/>
<dbReference type="CTD" id="57533"/>
<dbReference type="MGI" id="MGI:1098708">
    <property type="gene designation" value="Tbc1d14"/>
</dbReference>
<dbReference type="eggNOG" id="KOG2223">
    <property type="taxonomic scope" value="Eukaryota"/>
</dbReference>
<dbReference type="InParanoid" id="Q8CGA2"/>
<dbReference type="OrthoDB" id="294251at2759"/>
<dbReference type="PhylomeDB" id="Q8CGA2"/>
<dbReference type="Reactome" id="R-MMU-8854214">
    <property type="pathway name" value="TBC/RABGAPs"/>
</dbReference>
<dbReference type="BioGRID-ORCS" id="100855">
    <property type="hits" value="6 hits in 76 CRISPR screens"/>
</dbReference>
<dbReference type="ChiTaRS" id="Tbc1d14">
    <property type="organism name" value="mouse"/>
</dbReference>
<dbReference type="PRO" id="PR:Q8CGA2"/>
<dbReference type="Proteomes" id="UP000000589">
    <property type="component" value="Unplaced"/>
</dbReference>
<dbReference type="RNAct" id="Q8CGA2">
    <property type="molecule type" value="protein"/>
</dbReference>
<dbReference type="GO" id="GO:0005794">
    <property type="term" value="C:Golgi apparatus"/>
    <property type="evidence" value="ECO:0007669"/>
    <property type="project" value="UniProtKB-SubCell"/>
</dbReference>
<dbReference type="GO" id="GO:0005096">
    <property type="term" value="F:GTPase activator activity"/>
    <property type="evidence" value="ECO:0007669"/>
    <property type="project" value="UniProtKB-KW"/>
</dbReference>
<dbReference type="FunFam" id="1.10.8.270:FF:000008">
    <property type="entry name" value="Putative TBC1 domain family member 14"/>
    <property type="match status" value="1"/>
</dbReference>
<dbReference type="FunFam" id="1.10.10.750:FF:000005">
    <property type="entry name" value="TBC1 domain family member 14"/>
    <property type="match status" value="1"/>
</dbReference>
<dbReference type="FunFam" id="1.10.472.80:FF:000006">
    <property type="entry name" value="TBC1 domain family member 14"/>
    <property type="match status" value="1"/>
</dbReference>
<dbReference type="Gene3D" id="1.10.8.270">
    <property type="entry name" value="putative rabgap domain of human tbc1 domain family member 14 like domains"/>
    <property type="match status" value="1"/>
</dbReference>
<dbReference type="Gene3D" id="1.10.10.750">
    <property type="entry name" value="Ypt/Rab-GAP domain of gyp1p, domain 1"/>
    <property type="match status" value="1"/>
</dbReference>
<dbReference type="Gene3D" id="1.10.472.80">
    <property type="entry name" value="Ypt/Rab-GAP domain of gyp1p, domain 3"/>
    <property type="match status" value="1"/>
</dbReference>
<dbReference type="InterPro" id="IPR000195">
    <property type="entry name" value="Rab-GAP-TBC_dom"/>
</dbReference>
<dbReference type="InterPro" id="IPR035969">
    <property type="entry name" value="Rab-GAP_TBC_sf"/>
</dbReference>
<dbReference type="InterPro" id="IPR050302">
    <property type="entry name" value="Rab_GAP_TBC_domain"/>
</dbReference>
<dbReference type="PANTHER" id="PTHR47219">
    <property type="entry name" value="RAB GTPASE-ACTIVATING PROTEIN 1-LIKE"/>
    <property type="match status" value="1"/>
</dbReference>
<dbReference type="PANTHER" id="PTHR47219:SF21">
    <property type="entry name" value="TBC1 DOMAIN FAMILY MEMBER 14"/>
    <property type="match status" value="1"/>
</dbReference>
<dbReference type="Pfam" id="PF00566">
    <property type="entry name" value="RabGAP-TBC"/>
    <property type="match status" value="1"/>
</dbReference>
<dbReference type="SMART" id="SM00164">
    <property type="entry name" value="TBC"/>
    <property type="match status" value="1"/>
</dbReference>
<dbReference type="SUPFAM" id="SSF47923">
    <property type="entry name" value="Ypt/Rab-GAP domain of gyp1p"/>
    <property type="match status" value="2"/>
</dbReference>
<dbReference type="PROSITE" id="PS50086">
    <property type="entry name" value="TBC_RABGAP"/>
    <property type="match status" value="1"/>
</dbReference>
<proteinExistence type="evidence at protein level"/>
<evidence type="ECO:0000250" key="1">
    <source>
        <dbReference type="UniProtKB" id="Q9P2M4"/>
    </source>
</evidence>
<evidence type="ECO:0000255" key="2">
    <source>
        <dbReference type="PROSITE-ProRule" id="PRU00163"/>
    </source>
</evidence>
<evidence type="ECO:0000256" key="3">
    <source>
        <dbReference type="SAM" id="MobiDB-lite"/>
    </source>
</evidence>
<evidence type="ECO:0000305" key="4"/>
<evidence type="ECO:0007744" key="5">
    <source>
    </source>
</evidence>
<organism>
    <name type="scientific">Mus musculus</name>
    <name type="common">Mouse</name>
    <dbReference type="NCBI Taxonomy" id="10090"/>
    <lineage>
        <taxon>Eukaryota</taxon>
        <taxon>Metazoa</taxon>
        <taxon>Chordata</taxon>
        <taxon>Craniata</taxon>
        <taxon>Vertebrata</taxon>
        <taxon>Euteleostomi</taxon>
        <taxon>Mammalia</taxon>
        <taxon>Eutheria</taxon>
        <taxon>Euarchontoglires</taxon>
        <taxon>Glires</taxon>
        <taxon>Rodentia</taxon>
        <taxon>Myomorpha</taxon>
        <taxon>Muroidea</taxon>
        <taxon>Muridae</taxon>
        <taxon>Murinae</taxon>
        <taxon>Mus</taxon>
        <taxon>Mus</taxon>
    </lineage>
</organism>